<name>UVRA_HALH5</name>
<reference key="1">
    <citation type="journal article" date="2000" name="Nucleic Acids Res.">
        <title>Complete genome sequence of the alkaliphilic bacterium Bacillus halodurans and genomic sequence comparison with Bacillus subtilis.</title>
        <authorList>
            <person name="Takami H."/>
            <person name="Nakasone K."/>
            <person name="Takaki Y."/>
            <person name="Maeno G."/>
            <person name="Sasaki R."/>
            <person name="Masui N."/>
            <person name="Fuji F."/>
            <person name="Hirama C."/>
            <person name="Nakamura Y."/>
            <person name="Ogasawara N."/>
            <person name="Kuhara S."/>
            <person name="Horikoshi K."/>
        </authorList>
    </citation>
    <scope>NUCLEOTIDE SEQUENCE [LARGE SCALE GENOMIC DNA]</scope>
    <source>
        <strain>ATCC BAA-125 / DSM 18197 / FERM 7344 / JCM 9153 / C-125</strain>
    </source>
</reference>
<protein>
    <recommendedName>
        <fullName evidence="1">UvrABC system protein A</fullName>
        <shortName evidence="1">UvrA protein</shortName>
    </recommendedName>
    <alternativeName>
        <fullName evidence="1">Excinuclease ABC subunit A</fullName>
    </alternativeName>
</protein>
<feature type="chain" id="PRO_0000093034" description="UvrABC system protein A">
    <location>
        <begin position="1"/>
        <end position="957"/>
    </location>
</feature>
<feature type="domain" description="ABC transporter 1" evidence="1">
    <location>
        <begin position="309"/>
        <end position="587"/>
    </location>
</feature>
<feature type="domain" description="ABC transporter 2" evidence="1">
    <location>
        <begin position="607"/>
        <end position="935"/>
    </location>
</feature>
<feature type="zinc finger region" description="C4-type" evidence="1">
    <location>
        <begin position="252"/>
        <end position="279"/>
    </location>
</feature>
<feature type="zinc finger region" description="C4-type" evidence="1">
    <location>
        <begin position="738"/>
        <end position="764"/>
    </location>
</feature>
<feature type="binding site" evidence="1">
    <location>
        <begin position="33"/>
        <end position="40"/>
    </location>
    <ligand>
        <name>ATP</name>
        <dbReference type="ChEBI" id="CHEBI:30616"/>
    </ligand>
</feature>
<feature type="binding site" evidence="1">
    <location>
        <begin position="639"/>
        <end position="646"/>
    </location>
    <ligand>
        <name>ATP</name>
        <dbReference type="ChEBI" id="CHEBI:30616"/>
    </ligand>
</feature>
<keyword id="KW-0067">ATP-binding</keyword>
<keyword id="KW-0963">Cytoplasm</keyword>
<keyword id="KW-0227">DNA damage</keyword>
<keyword id="KW-0228">DNA excision</keyword>
<keyword id="KW-0234">DNA repair</keyword>
<keyword id="KW-0238">DNA-binding</keyword>
<keyword id="KW-0267">Excision nuclease</keyword>
<keyword id="KW-0479">Metal-binding</keyword>
<keyword id="KW-0547">Nucleotide-binding</keyword>
<keyword id="KW-1185">Reference proteome</keyword>
<keyword id="KW-0677">Repeat</keyword>
<keyword id="KW-0742">SOS response</keyword>
<keyword id="KW-0862">Zinc</keyword>
<keyword id="KW-0863">Zinc-finger</keyword>
<accession>Q9K6Y0</accession>
<evidence type="ECO:0000255" key="1">
    <source>
        <dbReference type="HAMAP-Rule" id="MF_00205"/>
    </source>
</evidence>
<gene>
    <name evidence="1" type="primary">uvrA</name>
    <name type="ordered locus">BH3594</name>
</gene>
<comment type="function">
    <text evidence="1">The UvrABC repair system catalyzes the recognition and processing of DNA lesions. UvrA is an ATPase and a DNA-binding protein. A damage recognition complex composed of 2 UvrA and 2 UvrB subunits scans DNA for abnormalities. When the presence of a lesion has been verified by UvrB, the UvrA molecules dissociate.</text>
</comment>
<comment type="subunit">
    <text evidence="1">Forms a heterotetramer with UvrB during the search for lesions.</text>
</comment>
<comment type="subcellular location">
    <subcellularLocation>
        <location evidence="1">Cytoplasm</location>
    </subcellularLocation>
</comment>
<comment type="similarity">
    <text evidence="1">Belongs to the ABC transporter superfamily. UvrA family.</text>
</comment>
<dbReference type="EMBL" id="BA000004">
    <property type="protein sequence ID" value="BAB07313.1"/>
    <property type="molecule type" value="Genomic_DNA"/>
</dbReference>
<dbReference type="PIR" id="B84099">
    <property type="entry name" value="B84099"/>
</dbReference>
<dbReference type="RefSeq" id="WP_010899722.1">
    <property type="nucleotide sequence ID" value="NC_002570.2"/>
</dbReference>
<dbReference type="SMR" id="Q9K6Y0"/>
<dbReference type="STRING" id="272558.gene:10729507"/>
<dbReference type="KEGG" id="bha:BH3594"/>
<dbReference type="eggNOG" id="COG0178">
    <property type="taxonomic scope" value="Bacteria"/>
</dbReference>
<dbReference type="HOGENOM" id="CLU_001370_2_1_9"/>
<dbReference type="OrthoDB" id="9809851at2"/>
<dbReference type="Proteomes" id="UP000001258">
    <property type="component" value="Chromosome"/>
</dbReference>
<dbReference type="GO" id="GO:0005737">
    <property type="term" value="C:cytoplasm"/>
    <property type="evidence" value="ECO:0007669"/>
    <property type="project" value="UniProtKB-SubCell"/>
</dbReference>
<dbReference type="GO" id="GO:0009380">
    <property type="term" value="C:excinuclease repair complex"/>
    <property type="evidence" value="ECO:0007669"/>
    <property type="project" value="InterPro"/>
</dbReference>
<dbReference type="GO" id="GO:0005524">
    <property type="term" value="F:ATP binding"/>
    <property type="evidence" value="ECO:0007669"/>
    <property type="project" value="UniProtKB-UniRule"/>
</dbReference>
<dbReference type="GO" id="GO:0016887">
    <property type="term" value="F:ATP hydrolysis activity"/>
    <property type="evidence" value="ECO:0007669"/>
    <property type="project" value="InterPro"/>
</dbReference>
<dbReference type="GO" id="GO:0003677">
    <property type="term" value="F:DNA binding"/>
    <property type="evidence" value="ECO:0007669"/>
    <property type="project" value="UniProtKB-UniRule"/>
</dbReference>
<dbReference type="GO" id="GO:0009381">
    <property type="term" value="F:excinuclease ABC activity"/>
    <property type="evidence" value="ECO:0007669"/>
    <property type="project" value="UniProtKB-UniRule"/>
</dbReference>
<dbReference type="GO" id="GO:0008270">
    <property type="term" value="F:zinc ion binding"/>
    <property type="evidence" value="ECO:0007669"/>
    <property type="project" value="UniProtKB-UniRule"/>
</dbReference>
<dbReference type="GO" id="GO:0006289">
    <property type="term" value="P:nucleotide-excision repair"/>
    <property type="evidence" value="ECO:0007669"/>
    <property type="project" value="UniProtKB-UniRule"/>
</dbReference>
<dbReference type="GO" id="GO:0009432">
    <property type="term" value="P:SOS response"/>
    <property type="evidence" value="ECO:0007669"/>
    <property type="project" value="UniProtKB-UniRule"/>
</dbReference>
<dbReference type="CDD" id="cd03270">
    <property type="entry name" value="ABC_UvrA_I"/>
    <property type="match status" value="1"/>
</dbReference>
<dbReference type="CDD" id="cd03271">
    <property type="entry name" value="ABC_UvrA_II"/>
    <property type="match status" value="1"/>
</dbReference>
<dbReference type="FunFam" id="1.20.1580.10:FF:000002">
    <property type="entry name" value="UvrABC system protein A"/>
    <property type="match status" value="1"/>
</dbReference>
<dbReference type="FunFam" id="3.40.50.300:FF:000028">
    <property type="entry name" value="UvrABC system protein A"/>
    <property type="match status" value="1"/>
</dbReference>
<dbReference type="Gene3D" id="1.10.8.280">
    <property type="entry name" value="ABC transporter ATPase domain-like"/>
    <property type="match status" value="1"/>
</dbReference>
<dbReference type="Gene3D" id="1.20.1580.10">
    <property type="entry name" value="ABC transporter ATPase like domain"/>
    <property type="match status" value="2"/>
</dbReference>
<dbReference type="Gene3D" id="3.30.1490.20">
    <property type="entry name" value="ATP-grasp fold, A domain"/>
    <property type="match status" value="1"/>
</dbReference>
<dbReference type="Gene3D" id="3.40.50.300">
    <property type="entry name" value="P-loop containing nucleotide triphosphate hydrolases"/>
    <property type="match status" value="2"/>
</dbReference>
<dbReference type="HAMAP" id="MF_00205">
    <property type="entry name" value="UvrA"/>
    <property type="match status" value="1"/>
</dbReference>
<dbReference type="InterPro" id="IPR003593">
    <property type="entry name" value="AAA+_ATPase"/>
</dbReference>
<dbReference type="InterPro" id="IPR003439">
    <property type="entry name" value="ABC_transporter-like_ATP-bd"/>
</dbReference>
<dbReference type="InterPro" id="IPR017871">
    <property type="entry name" value="ABC_transporter-like_CS"/>
</dbReference>
<dbReference type="InterPro" id="IPR013815">
    <property type="entry name" value="ATP_grasp_subdomain_1"/>
</dbReference>
<dbReference type="InterPro" id="IPR027417">
    <property type="entry name" value="P-loop_NTPase"/>
</dbReference>
<dbReference type="InterPro" id="IPR004602">
    <property type="entry name" value="UvrA"/>
</dbReference>
<dbReference type="InterPro" id="IPR041552">
    <property type="entry name" value="UvrA_DNA-bd"/>
</dbReference>
<dbReference type="InterPro" id="IPR041102">
    <property type="entry name" value="UvrA_inter"/>
</dbReference>
<dbReference type="NCBIfam" id="NF001503">
    <property type="entry name" value="PRK00349.1"/>
    <property type="match status" value="1"/>
</dbReference>
<dbReference type="NCBIfam" id="TIGR00630">
    <property type="entry name" value="uvra"/>
    <property type="match status" value="1"/>
</dbReference>
<dbReference type="PANTHER" id="PTHR43152">
    <property type="entry name" value="UVRABC SYSTEM PROTEIN A"/>
    <property type="match status" value="1"/>
</dbReference>
<dbReference type="PANTHER" id="PTHR43152:SF3">
    <property type="entry name" value="UVRABC SYSTEM PROTEIN A"/>
    <property type="match status" value="1"/>
</dbReference>
<dbReference type="Pfam" id="PF17755">
    <property type="entry name" value="UvrA_DNA-bind"/>
    <property type="match status" value="1"/>
</dbReference>
<dbReference type="Pfam" id="PF17760">
    <property type="entry name" value="UvrA_inter"/>
    <property type="match status" value="1"/>
</dbReference>
<dbReference type="SMART" id="SM00382">
    <property type="entry name" value="AAA"/>
    <property type="match status" value="2"/>
</dbReference>
<dbReference type="SUPFAM" id="SSF52540">
    <property type="entry name" value="P-loop containing nucleoside triphosphate hydrolases"/>
    <property type="match status" value="2"/>
</dbReference>
<dbReference type="PROSITE" id="PS00211">
    <property type="entry name" value="ABC_TRANSPORTER_1"/>
    <property type="match status" value="2"/>
</dbReference>
<dbReference type="PROSITE" id="PS50893">
    <property type="entry name" value="ABC_TRANSPORTER_2"/>
    <property type="match status" value="1"/>
</dbReference>
<sequence>MGLDNIVVKGARSHNLKNIDVTIPRDKLVVLTGLSGSGKSSLAFDTIYAEGQRRYVESLSAYARQFLGQMDKPDVDSIEGLSPAISIDQKTTSRNPRSTVGTVTEIFDYLRLLYARIGKPVCPKHGIEISSQTVQQMVDRILSYEERTKLQILAPLVSGRKGTHVKVLEDIKKQGFVRVRIDGEMREVAEEIELDKNKKHTIEVVIDRIVVKEGIETRLADSLETALQLADGRVVVDIIGKEELLFSQHHACPQCGFSIPELEPRMFSFNSPFGACPTCDGLGVKLEVDLELVIPDRSRTLSENAIAPWEPISSQYYPQMLEAVCNHYGIDMDTPVEQLPDHQLEKILYGSGHEKIFFRYENDLGQVRENEILFEGVIPNVKRRYHETSSDYIRDQLEAYMAQKACPTCKGHRLKKEALAVLIGGKHLGEVTKLSIKEAKTFFESLELSKKDFSIARLILKEINDRLGFLMNVGLDYLTLSRSAGTLSGGEAQRIRLATQIGSSLMGVLYILDEPSIGLHQRDNDRLISTLAHMRDLGNTLIVVEHDEDTMLAADYIIDIGPGAGVHGGQVTAAGSPEEIMNDAKSLTGQYLSGKKFIPIPSERRQPNGRSFTVKGASENNLKQVNVEFPLGVFIAVTGVSGSGKSTLINEIVHKALAQKLHRAKDKPGKHKEIVGIEHVDKVIDIDQSPIGRTPRSNPATYTGVFDDIRDVFAMTNEAKVRGYKKGRFSFNVKGGRCEACRGDGIIKIEMHFLPDVYVPCEVCHGKRYNRETLDITYKGKTIADVLDMTVEEALEFFTNIPRIKRKIQTLVDVGLGYIKLGQPATTLSGGEAQRVKLASQLHKRATGKTLYILDEPTTGLHVDDIDRLLKVLQRIVDNGDTVLVIEHNLDVIKTVDHIIDLGPEGGDKGGTIVAQGTPEEVVEVEGSYTGKYLRPILERDRKRMDSRIREHELQRS</sequence>
<proteinExistence type="inferred from homology"/>
<organism>
    <name type="scientific">Halalkalibacterium halodurans (strain ATCC BAA-125 / DSM 18197 / FERM 7344 / JCM 9153 / C-125)</name>
    <name type="common">Bacillus halodurans</name>
    <dbReference type="NCBI Taxonomy" id="272558"/>
    <lineage>
        <taxon>Bacteria</taxon>
        <taxon>Bacillati</taxon>
        <taxon>Bacillota</taxon>
        <taxon>Bacilli</taxon>
        <taxon>Bacillales</taxon>
        <taxon>Bacillaceae</taxon>
        <taxon>Halalkalibacterium (ex Joshi et al. 2022)</taxon>
    </lineage>
</organism>